<accession>P9WF23</accession>
<accession>L0TCN9</accession>
<accession>P65077</accession>
<accession>Q50718</accession>
<sequence>MRATVGLVEAIGIRELRQHASRYLARVEAGEELGVTNKGRLVARLIPVQAAERSREALIESGVLIPARRPQNLLDVTAEPARGRKRTLSDVLNEMRDEQ</sequence>
<organism>
    <name type="scientific">Mycobacterium tuberculosis (strain ATCC 25618 / H37Rv)</name>
    <dbReference type="NCBI Taxonomy" id="83332"/>
    <lineage>
        <taxon>Bacteria</taxon>
        <taxon>Bacillati</taxon>
        <taxon>Actinomycetota</taxon>
        <taxon>Actinomycetes</taxon>
        <taxon>Mycobacteriales</taxon>
        <taxon>Mycobacteriaceae</taxon>
        <taxon>Mycobacterium</taxon>
        <taxon>Mycobacterium tuberculosis complex</taxon>
    </lineage>
</organism>
<protein>
    <recommendedName>
        <fullName>Antitoxin VapB47</fullName>
    </recommendedName>
</protein>
<evidence type="ECO:0000269" key="1">
    <source>
    </source>
</evidence>
<evidence type="ECO:0000305" key="2"/>
<reference key="1">
    <citation type="journal article" date="1998" name="Nature">
        <title>Deciphering the biology of Mycobacterium tuberculosis from the complete genome sequence.</title>
        <authorList>
            <person name="Cole S.T."/>
            <person name="Brosch R."/>
            <person name="Parkhill J."/>
            <person name="Garnier T."/>
            <person name="Churcher C.M."/>
            <person name="Harris D.E."/>
            <person name="Gordon S.V."/>
            <person name="Eiglmeier K."/>
            <person name="Gas S."/>
            <person name="Barry C.E. III"/>
            <person name="Tekaia F."/>
            <person name="Badcock K."/>
            <person name="Basham D."/>
            <person name="Brown D."/>
            <person name="Chillingworth T."/>
            <person name="Connor R."/>
            <person name="Davies R.M."/>
            <person name="Devlin K."/>
            <person name="Feltwell T."/>
            <person name="Gentles S."/>
            <person name="Hamlin N."/>
            <person name="Holroyd S."/>
            <person name="Hornsby T."/>
            <person name="Jagels K."/>
            <person name="Krogh A."/>
            <person name="McLean J."/>
            <person name="Moule S."/>
            <person name="Murphy L.D."/>
            <person name="Oliver S."/>
            <person name="Osborne J."/>
            <person name="Quail M.A."/>
            <person name="Rajandream M.A."/>
            <person name="Rogers J."/>
            <person name="Rutter S."/>
            <person name="Seeger K."/>
            <person name="Skelton S."/>
            <person name="Squares S."/>
            <person name="Squares R."/>
            <person name="Sulston J.E."/>
            <person name="Taylor K."/>
            <person name="Whitehead S."/>
            <person name="Barrell B.G."/>
        </authorList>
    </citation>
    <scope>NUCLEOTIDE SEQUENCE [LARGE SCALE GENOMIC DNA]</scope>
    <source>
        <strain>ATCC 25618 / H37Rv</strain>
    </source>
</reference>
<reference key="2">
    <citation type="journal article" date="2009" name="PLoS Genet.">
        <title>Comprehensive functional analysis of Mycobacterium tuberculosis toxin-antitoxin systems: implications for pathogenesis, stress responses, and evolution.</title>
        <authorList>
            <person name="Ramage H.R."/>
            <person name="Connolly L.E."/>
            <person name="Cox J.S."/>
        </authorList>
    </citation>
    <scope>EXPRESSION IN M.SMEGMATIS</scope>
    <scope>FUNCTION AS AN ANTITOXIN</scope>
    <source>
        <strain>ATCC 35801 / TMC 107 / Erdman</strain>
    </source>
</reference>
<reference key="3">
    <citation type="journal article" date="2011" name="Mol. Cell. Proteomics">
        <title>Proteogenomic analysis of Mycobacterium tuberculosis by high resolution mass spectrometry.</title>
        <authorList>
            <person name="Kelkar D.S."/>
            <person name="Kumar D."/>
            <person name="Kumar P."/>
            <person name="Balakrishnan L."/>
            <person name="Muthusamy B."/>
            <person name="Yadav A.K."/>
            <person name="Shrivastava P."/>
            <person name="Marimuthu A."/>
            <person name="Anand S."/>
            <person name="Sundaram H."/>
            <person name="Kingsbury R."/>
            <person name="Harsha H.C."/>
            <person name="Nair B."/>
            <person name="Prasad T.S."/>
            <person name="Chauhan D.S."/>
            <person name="Katoch K."/>
            <person name="Katoch V.M."/>
            <person name="Kumar P."/>
            <person name="Chaerkady R."/>
            <person name="Ramachandran S."/>
            <person name="Dash D."/>
            <person name="Pandey A."/>
        </authorList>
    </citation>
    <scope>IDENTIFICATION BY MASS SPECTROMETRY [LARGE SCALE ANALYSIS]</scope>
    <source>
        <strain>ATCC 25618 / H37Rv</strain>
    </source>
</reference>
<feature type="chain" id="PRO_0000104127" description="Antitoxin VapB47">
    <location>
        <begin position="1"/>
        <end position="99"/>
    </location>
</feature>
<proteinExistence type="evidence at protein level"/>
<gene>
    <name type="primary">vapB47</name>
    <name type="ordered locus">Rv3407</name>
    <name type="ORF">MTCY78.21c</name>
</gene>
<comment type="function">
    <text evidence="1">Antitoxin component of a type II toxin-antitoxin (TA) system. Upon expression in M.smegmatis neutralizes the effect of cognate toxin VapC47.</text>
</comment>
<comment type="similarity">
    <text evidence="2">Belongs to the phD/YefM antitoxin family.</text>
</comment>
<keyword id="KW-1185">Reference proteome</keyword>
<keyword id="KW-1277">Toxin-antitoxin system</keyword>
<name>VPB47_MYCTU</name>
<dbReference type="EMBL" id="AL123456">
    <property type="protein sequence ID" value="CCP46229.1"/>
    <property type="molecule type" value="Genomic_DNA"/>
</dbReference>
<dbReference type="PIR" id="D70736">
    <property type="entry name" value="D70736"/>
</dbReference>
<dbReference type="RefSeq" id="NP_217924.1">
    <property type="nucleotide sequence ID" value="NC_000962.3"/>
</dbReference>
<dbReference type="RefSeq" id="WP_003417995.1">
    <property type="nucleotide sequence ID" value="NC_000962.3"/>
</dbReference>
<dbReference type="SMR" id="P9WF23"/>
<dbReference type="STRING" id="83332.Rv3407"/>
<dbReference type="PaxDb" id="83332-Rv3407"/>
<dbReference type="DNASU" id="887505"/>
<dbReference type="GeneID" id="887505"/>
<dbReference type="KEGG" id="mtu:Rv3407"/>
<dbReference type="KEGG" id="mtv:RVBD_3407"/>
<dbReference type="TubercuList" id="Rv3407"/>
<dbReference type="eggNOG" id="COG4118">
    <property type="taxonomic scope" value="Bacteria"/>
</dbReference>
<dbReference type="InParanoid" id="P9WF23"/>
<dbReference type="OrthoDB" id="557859at2"/>
<dbReference type="Proteomes" id="UP000001584">
    <property type="component" value="Chromosome"/>
</dbReference>
<dbReference type="GO" id="GO:0097351">
    <property type="term" value="F:toxin sequestering activity"/>
    <property type="evidence" value="ECO:0000318"/>
    <property type="project" value="GO_Central"/>
</dbReference>
<dbReference type="GO" id="GO:0045927">
    <property type="term" value="P:positive regulation of growth"/>
    <property type="evidence" value="ECO:0000315"/>
    <property type="project" value="MTBBASE"/>
</dbReference>
<dbReference type="FunFam" id="3.40.1620.10:FF:000002">
    <property type="entry name" value="Antitoxin"/>
    <property type="match status" value="1"/>
</dbReference>
<dbReference type="Gene3D" id="3.40.1620.10">
    <property type="entry name" value="YefM-like domain"/>
    <property type="match status" value="1"/>
</dbReference>
<dbReference type="InterPro" id="IPR006442">
    <property type="entry name" value="Antitoxin_Phd/YefM"/>
</dbReference>
<dbReference type="InterPro" id="IPR051416">
    <property type="entry name" value="phD-YefM_TA_antitoxins"/>
</dbReference>
<dbReference type="InterPro" id="IPR036165">
    <property type="entry name" value="YefM-like_sf"/>
</dbReference>
<dbReference type="NCBIfam" id="TIGR01552">
    <property type="entry name" value="phd_fam"/>
    <property type="match status" value="1"/>
</dbReference>
<dbReference type="PANTHER" id="PTHR35377:SF5">
    <property type="entry name" value="ANTITOXIN VAPB46"/>
    <property type="match status" value="1"/>
</dbReference>
<dbReference type="PANTHER" id="PTHR35377">
    <property type="entry name" value="ANTITOXIN VAPB49-RELATED-RELATED"/>
    <property type="match status" value="1"/>
</dbReference>
<dbReference type="Pfam" id="PF02604">
    <property type="entry name" value="PhdYeFM_antitox"/>
    <property type="match status" value="1"/>
</dbReference>
<dbReference type="SUPFAM" id="SSF143120">
    <property type="entry name" value="YefM-like"/>
    <property type="match status" value="1"/>
</dbReference>